<name>RL32_STRS7</name>
<accession>C0MGD6</accession>
<organism>
    <name type="scientific">Streptococcus equi subsp. zooepidemicus (strain H70)</name>
    <dbReference type="NCBI Taxonomy" id="553483"/>
    <lineage>
        <taxon>Bacteria</taxon>
        <taxon>Bacillati</taxon>
        <taxon>Bacillota</taxon>
        <taxon>Bacilli</taxon>
        <taxon>Lactobacillales</taxon>
        <taxon>Streptococcaceae</taxon>
        <taxon>Streptococcus</taxon>
    </lineage>
</organism>
<keyword id="KW-0687">Ribonucleoprotein</keyword>
<keyword id="KW-0689">Ribosomal protein</keyword>
<protein>
    <recommendedName>
        <fullName evidence="1">Large ribosomal subunit protein bL32</fullName>
    </recommendedName>
    <alternativeName>
        <fullName evidence="3">50S ribosomal protein L32</fullName>
    </alternativeName>
</protein>
<gene>
    <name evidence="1" type="primary">rpmF</name>
    <name type="ordered locus">SZO_18850</name>
</gene>
<feature type="chain" id="PRO_1000205272" description="Large ribosomal subunit protein bL32">
    <location>
        <begin position="1"/>
        <end position="60"/>
    </location>
</feature>
<feature type="region of interest" description="Disordered" evidence="2">
    <location>
        <begin position="1"/>
        <end position="21"/>
    </location>
</feature>
<feature type="compositionally biased region" description="Basic residues" evidence="2">
    <location>
        <begin position="7"/>
        <end position="20"/>
    </location>
</feature>
<reference key="1">
    <citation type="journal article" date="2009" name="PLoS Pathog.">
        <title>Genomic evidence for the evolution of Streptococcus equi: host restriction, increased virulence, and genetic exchange with human pathogens.</title>
        <authorList>
            <person name="Holden M.T.G."/>
            <person name="Heather Z."/>
            <person name="Paillot R."/>
            <person name="Steward K.F."/>
            <person name="Webb K."/>
            <person name="Ainslie F."/>
            <person name="Jourdan T."/>
            <person name="Bason N.C."/>
            <person name="Holroyd N.E."/>
            <person name="Mungall K."/>
            <person name="Quail M.A."/>
            <person name="Sanders M."/>
            <person name="Simmonds M."/>
            <person name="Willey D."/>
            <person name="Brooks K."/>
            <person name="Aanensen D.M."/>
            <person name="Spratt B.G."/>
            <person name="Jolley K.A."/>
            <person name="Maiden M.C.J."/>
            <person name="Kehoe M."/>
            <person name="Chanter N."/>
            <person name="Bentley S.D."/>
            <person name="Robinson C."/>
            <person name="Maskell D.J."/>
            <person name="Parkhill J."/>
            <person name="Waller A.S."/>
        </authorList>
    </citation>
    <scope>NUCLEOTIDE SEQUENCE [LARGE SCALE GENOMIC DNA]</scope>
    <source>
        <strain>H70</strain>
    </source>
</reference>
<proteinExistence type="inferred from homology"/>
<dbReference type="EMBL" id="FM204884">
    <property type="protein sequence ID" value="CAX00832.1"/>
    <property type="molecule type" value="Genomic_DNA"/>
</dbReference>
<dbReference type="SMR" id="C0MGD6"/>
<dbReference type="KEGG" id="seq:SZO_18850"/>
<dbReference type="eggNOG" id="COG0333">
    <property type="taxonomic scope" value="Bacteria"/>
</dbReference>
<dbReference type="HOGENOM" id="CLU_129084_2_3_9"/>
<dbReference type="Proteomes" id="UP000001368">
    <property type="component" value="Chromosome"/>
</dbReference>
<dbReference type="GO" id="GO:0015934">
    <property type="term" value="C:large ribosomal subunit"/>
    <property type="evidence" value="ECO:0007669"/>
    <property type="project" value="InterPro"/>
</dbReference>
<dbReference type="GO" id="GO:0003735">
    <property type="term" value="F:structural constituent of ribosome"/>
    <property type="evidence" value="ECO:0007669"/>
    <property type="project" value="InterPro"/>
</dbReference>
<dbReference type="GO" id="GO:0006412">
    <property type="term" value="P:translation"/>
    <property type="evidence" value="ECO:0007669"/>
    <property type="project" value="UniProtKB-UniRule"/>
</dbReference>
<dbReference type="HAMAP" id="MF_00340">
    <property type="entry name" value="Ribosomal_bL32"/>
    <property type="match status" value="1"/>
</dbReference>
<dbReference type="InterPro" id="IPR002677">
    <property type="entry name" value="Ribosomal_bL32"/>
</dbReference>
<dbReference type="InterPro" id="IPR044957">
    <property type="entry name" value="Ribosomal_bL32_bact"/>
</dbReference>
<dbReference type="InterPro" id="IPR011332">
    <property type="entry name" value="Ribosomal_zn-bd"/>
</dbReference>
<dbReference type="NCBIfam" id="TIGR01031">
    <property type="entry name" value="rpmF_bact"/>
    <property type="match status" value="1"/>
</dbReference>
<dbReference type="PANTHER" id="PTHR35534">
    <property type="entry name" value="50S RIBOSOMAL PROTEIN L32"/>
    <property type="match status" value="1"/>
</dbReference>
<dbReference type="PANTHER" id="PTHR35534:SF1">
    <property type="entry name" value="LARGE RIBOSOMAL SUBUNIT PROTEIN BL32"/>
    <property type="match status" value="1"/>
</dbReference>
<dbReference type="Pfam" id="PF01783">
    <property type="entry name" value="Ribosomal_L32p"/>
    <property type="match status" value="1"/>
</dbReference>
<dbReference type="SUPFAM" id="SSF57829">
    <property type="entry name" value="Zn-binding ribosomal proteins"/>
    <property type="match status" value="1"/>
</dbReference>
<sequence>MAVPARHTSKAKKNKRRTHYKLTAPSVKFDETTGDYSRSHRVSLKGYYKGRKIAKANEAK</sequence>
<comment type="similarity">
    <text evidence="1">Belongs to the bacterial ribosomal protein bL32 family.</text>
</comment>
<evidence type="ECO:0000255" key="1">
    <source>
        <dbReference type="HAMAP-Rule" id="MF_00340"/>
    </source>
</evidence>
<evidence type="ECO:0000256" key="2">
    <source>
        <dbReference type="SAM" id="MobiDB-lite"/>
    </source>
</evidence>
<evidence type="ECO:0000305" key="3"/>